<gene>
    <name type="ordered locus">At2g24330</name>
    <name type="ORF">T28I24.6</name>
</gene>
<feature type="chain" id="PRO_0000065154" description="Uncharacterized protein At2g24330">
    <location>
        <begin position="1"/>
        <end position="408"/>
    </location>
</feature>
<feature type="region of interest" description="Disordered" evidence="1">
    <location>
        <begin position="218"/>
        <end position="265"/>
    </location>
</feature>
<feature type="region of interest" description="Disordered" evidence="1">
    <location>
        <begin position="367"/>
        <end position="408"/>
    </location>
</feature>
<feature type="compositionally biased region" description="Low complexity" evidence="1">
    <location>
        <begin position="369"/>
        <end position="379"/>
    </location>
</feature>
<feature type="compositionally biased region" description="Acidic residues" evidence="1">
    <location>
        <begin position="394"/>
        <end position="408"/>
    </location>
</feature>
<evidence type="ECO:0000256" key="1">
    <source>
        <dbReference type="SAM" id="MobiDB-lite"/>
    </source>
</evidence>
<evidence type="ECO:0000305" key="2"/>
<accession>Q9ZQ34</accession>
<keyword id="KW-1185">Reference proteome</keyword>
<organism>
    <name type="scientific">Arabidopsis thaliana</name>
    <name type="common">Mouse-ear cress</name>
    <dbReference type="NCBI Taxonomy" id="3702"/>
    <lineage>
        <taxon>Eukaryota</taxon>
        <taxon>Viridiplantae</taxon>
        <taxon>Streptophyta</taxon>
        <taxon>Embryophyta</taxon>
        <taxon>Tracheophyta</taxon>
        <taxon>Spermatophyta</taxon>
        <taxon>Magnoliopsida</taxon>
        <taxon>eudicotyledons</taxon>
        <taxon>Gunneridae</taxon>
        <taxon>Pentapetalae</taxon>
        <taxon>rosids</taxon>
        <taxon>malvids</taxon>
        <taxon>Brassicales</taxon>
        <taxon>Brassicaceae</taxon>
        <taxon>Camelineae</taxon>
        <taxon>Arabidopsis</taxon>
    </lineage>
</organism>
<sequence>MAVGEKEHEGTVVESGGEKNDSAVVLSASGEKKTTKRKGLFSRLWNAIFRVRGDDFEKRLKNISKEEATVRNRMKRRSITRRNFIRNLIAFSVFFEVIAVSYAIMTTRDEDLDWKLRSFRILPMFLLPAVAFLLYSSLVGFWRMCDRRDQHTLEKLQAEMLGKINELKERTNYYITQQLIQRYDPDPAAKAAAATVLASKLGAESGLKVFVGDESQLEPTAGKNNAKHSGGLRNRKQTNTRGNSAETTPIHHSDNESNHSGTSERITGTEQNQQMVFEHYNPQEYAAHDGSWISRIAALLVGEDPSQSYALICGNCRMHNGLARKEDFPYITYYCPHCRALNKPKHSEEHSLIAPADTLPKVSLKPMESEVINSSSSTSERGNSPIPLLHTPEIVEEVPETAENETPN</sequence>
<reference key="1">
    <citation type="journal article" date="1999" name="Nature">
        <title>Sequence and analysis of chromosome 2 of the plant Arabidopsis thaliana.</title>
        <authorList>
            <person name="Lin X."/>
            <person name="Kaul S."/>
            <person name="Rounsley S.D."/>
            <person name="Shea T.P."/>
            <person name="Benito M.-I."/>
            <person name="Town C.D."/>
            <person name="Fujii C.Y."/>
            <person name="Mason T.M."/>
            <person name="Bowman C.L."/>
            <person name="Barnstead M.E."/>
            <person name="Feldblyum T.V."/>
            <person name="Buell C.R."/>
            <person name="Ketchum K.A."/>
            <person name="Lee J.J."/>
            <person name="Ronning C.M."/>
            <person name="Koo H.L."/>
            <person name="Moffat K.S."/>
            <person name="Cronin L.A."/>
            <person name="Shen M."/>
            <person name="Pai G."/>
            <person name="Van Aken S."/>
            <person name="Umayam L."/>
            <person name="Tallon L.J."/>
            <person name="Gill J.E."/>
            <person name="Adams M.D."/>
            <person name="Carrera A.J."/>
            <person name="Creasy T.H."/>
            <person name="Goodman H.M."/>
            <person name="Somerville C.R."/>
            <person name="Copenhaver G.P."/>
            <person name="Preuss D."/>
            <person name="Nierman W.C."/>
            <person name="White O."/>
            <person name="Eisen J.A."/>
            <person name="Salzberg S.L."/>
            <person name="Fraser C.M."/>
            <person name="Venter J.C."/>
        </authorList>
    </citation>
    <scope>NUCLEOTIDE SEQUENCE [LARGE SCALE GENOMIC DNA]</scope>
    <source>
        <strain>cv. Columbia</strain>
    </source>
</reference>
<reference key="2">
    <citation type="journal article" date="2017" name="Plant J.">
        <title>Araport11: a complete reannotation of the Arabidopsis thaliana reference genome.</title>
        <authorList>
            <person name="Cheng C.Y."/>
            <person name="Krishnakumar V."/>
            <person name="Chan A.P."/>
            <person name="Thibaud-Nissen F."/>
            <person name="Schobel S."/>
            <person name="Town C.D."/>
        </authorList>
    </citation>
    <scope>GENOME REANNOTATION</scope>
    <source>
        <strain>cv. Columbia</strain>
    </source>
</reference>
<reference key="3">
    <citation type="journal article" date="2003" name="Science">
        <title>Empirical analysis of transcriptional activity in the Arabidopsis genome.</title>
        <authorList>
            <person name="Yamada K."/>
            <person name="Lim J."/>
            <person name="Dale J.M."/>
            <person name="Chen H."/>
            <person name="Shinn P."/>
            <person name="Palm C.J."/>
            <person name="Southwick A.M."/>
            <person name="Wu H.C."/>
            <person name="Kim C.J."/>
            <person name="Nguyen M."/>
            <person name="Pham P.K."/>
            <person name="Cheuk R.F."/>
            <person name="Karlin-Newmann G."/>
            <person name="Liu S.X."/>
            <person name="Lam B."/>
            <person name="Sakano H."/>
            <person name="Wu T."/>
            <person name="Yu G."/>
            <person name="Miranda M."/>
            <person name="Quach H.L."/>
            <person name="Tripp M."/>
            <person name="Chang C.H."/>
            <person name="Lee J.M."/>
            <person name="Toriumi M.J."/>
            <person name="Chan M.M."/>
            <person name="Tang C.C."/>
            <person name="Onodera C.S."/>
            <person name="Deng J.M."/>
            <person name="Akiyama K."/>
            <person name="Ansari Y."/>
            <person name="Arakawa T."/>
            <person name="Banh J."/>
            <person name="Banno F."/>
            <person name="Bowser L."/>
            <person name="Brooks S.Y."/>
            <person name="Carninci P."/>
            <person name="Chao Q."/>
            <person name="Choy N."/>
            <person name="Enju A."/>
            <person name="Goldsmith A.D."/>
            <person name="Gurjal M."/>
            <person name="Hansen N.F."/>
            <person name="Hayashizaki Y."/>
            <person name="Johnson-Hopson C."/>
            <person name="Hsuan V.W."/>
            <person name="Iida K."/>
            <person name="Karnes M."/>
            <person name="Khan S."/>
            <person name="Koesema E."/>
            <person name="Ishida J."/>
            <person name="Jiang P.X."/>
            <person name="Jones T."/>
            <person name="Kawai J."/>
            <person name="Kamiya A."/>
            <person name="Meyers C."/>
            <person name="Nakajima M."/>
            <person name="Narusaka M."/>
            <person name="Seki M."/>
            <person name="Sakurai T."/>
            <person name="Satou M."/>
            <person name="Tamse R."/>
            <person name="Vaysberg M."/>
            <person name="Wallender E.K."/>
            <person name="Wong C."/>
            <person name="Yamamura Y."/>
            <person name="Yuan S."/>
            <person name="Shinozaki K."/>
            <person name="Davis R.W."/>
            <person name="Theologis A."/>
            <person name="Ecker J.R."/>
        </authorList>
    </citation>
    <scope>NUCLEOTIDE SEQUENCE [LARGE SCALE MRNA]</scope>
    <source>
        <strain>cv. Columbia</strain>
    </source>
</reference>
<proteinExistence type="evidence at transcript level"/>
<dbReference type="EMBL" id="AC006403">
    <property type="protein sequence ID" value="AAD18106.1"/>
    <property type="molecule type" value="Genomic_DNA"/>
</dbReference>
<dbReference type="EMBL" id="CP002685">
    <property type="protein sequence ID" value="AEC07563.1"/>
    <property type="molecule type" value="Genomic_DNA"/>
</dbReference>
<dbReference type="EMBL" id="BT006125">
    <property type="protein sequence ID" value="AAP04110.1"/>
    <property type="molecule type" value="mRNA"/>
</dbReference>
<dbReference type="PIR" id="D84635">
    <property type="entry name" value="D84635"/>
</dbReference>
<dbReference type="RefSeq" id="NP_180010.1">
    <property type="nucleotide sequence ID" value="NM_127995.3"/>
</dbReference>
<dbReference type="BioGRID" id="2321">
    <property type="interactions" value="1"/>
</dbReference>
<dbReference type="FunCoup" id="Q9ZQ34">
    <property type="interactions" value="2982"/>
</dbReference>
<dbReference type="STRING" id="3702.Q9ZQ34"/>
<dbReference type="TCDB" id="8.A.109.2.1">
    <property type="family name" value="the endoplasmic reticulum junction-forming protein (lunapark) family"/>
</dbReference>
<dbReference type="iPTMnet" id="Q9ZQ34"/>
<dbReference type="PaxDb" id="3702-AT2G24330.1"/>
<dbReference type="ProteomicsDB" id="243122"/>
<dbReference type="EnsemblPlants" id="AT2G24330.1">
    <property type="protein sequence ID" value="AT2G24330.1"/>
    <property type="gene ID" value="AT2G24330"/>
</dbReference>
<dbReference type="GeneID" id="816969"/>
<dbReference type="Gramene" id="AT2G24330.1">
    <property type="protein sequence ID" value="AT2G24330.1"/>
    <property type="gene ID" value="AT2G24330"/>
</dbReference>
<dbReference type="KEGG" id="ath:AT2G24330"/>
<dbReference type="Araport" id="AT2G24330"/>
<dbReference type="TAIR" id="AT2G24330">
    <property type="gene designation" value="LNP1"/>
</dbReference>
<dbReference type="eggNOG" id="KOG2846">
    <property type="taxonomic scope" value="Eukaryota"/>
</dbReference>
<dbReference type="HOGENOM" id="CLU_033679_0_0_1"/>
<dbReference type="InParanoid" id="Q9ZQ34"/>
<dbReference type="OMA" id="TRMNERK"/>
<dbReference type="OrthoDB" id="1725934at2759"/>
<dbReference type="PhylomeDB" id="Q9ZQ34"/>
<dbReference type="PRO" id="PR:Q9ZQ34"/>
<dbReference type="Proteomes" id="UP000006548">
    <property type="component" value="Chromosome 2"/>
</dbReference>
<dbReference type="ExpressionAtlas" id="Q9ZQ34">
    <property type="expression patterns" value="baseline and differential"/>
</dbReference>
<dbReference type="GO" id="GO:0005783">
    <property type="term" value="C:endoplasmic reticulum"/>
    <property type="evidence" value="ECO:0000314"/>
    <property type="project" value="TAIR"/>
</dbReference>
<dbReference type="GO" id="GO:0061630">
    <property type="term" value="F:ubiquitin protein ligase activity"/>
    <property type="evidence" value="ECO:0000314"/>
    <property type="project" value="TAIR"/>
</dbReference>
<dbReference type="GO" id="GO:0071784">
    <property type="term" value="P:endoplasmic reticulum cisternal network assembly"/>
    <property type="evidence" value="ECO:0000316"/>
    <property type="project" value="TAIR"/>
</dbReference>
<dbReference type="GO" id="GO:0071786">
    <property type="term" value="P:endoplasmic reticulum tubular network organization"/>
    <property type="evidence" value="ECO:0007669"/>
    <property type="project" value="InterPro"/>
</dbReference>
<dbReference type="InterPro" id="IPR040115">
    <property type="entry name" value="Lnp"/>
</dbReference>
<dbReference type="InterPro" id="IPR019273">
    <property type="entry name" value="Lunapark_Znf"/>
</dbReference>
<dbReference type="PANTHER" id="PTHR22166">
    <property type="entry name" value="ENDOPLASMIC RETICULUM JUNCTION FORMATION PROTEIN LUNAPARK"/>
    <property type="match status" value="1"/>
</dbReference>
<dbReference type="PANTHER" id="PTHR22166:SF12">
    <property type="entry name" value="ENDOPLASMIC RETICULUM JUNCTION FORMATION PROTEIN LUNAPARK"/>
    <property type="match status" value="1"/>
</dbReference>
<dbReference type="Pfam" id="PF10058">
    <property type="entry name" value="Zn_ribbon_10"/>
    <property type="match status" value="1"/>
</dbReference>
<comment type="similarity">
    <text evidence="2">To C.elegans C05E11.1.</text>
</comment>
<name>Y2433_ARATH</name>
<protein>
    <recommendedName>
        <fullName>Uncharacterized protein At2g24330</fullName>
    </recommendedName>
</protein>